<evidence type="ECO:0000250" key="1"/>
<evidence type="ECO:0000250" key="2">
    <source>
        <dbReference type="UniProtKB" id="P00157"/>
    </source>
</evidence>
<evidence type="ECO:0000255" key="3">
    <source>
        <dbReference type="PROSITE-ProRule" id="PRU00967"/>
    </source>
</evidence>
<evidence type="ECO:0000255" key="4">
    <source>
        <dbReference type="PROSITE-ProRule" id="PRU00968"/>
    </source>
</evidence>
<dbReference type="EMBL" id="D88642">
    <property type="protein sequence ID" value="BAA13670.1"/>
    <property type="molecule type" value="Genomic_DNA"/>
</dbReference>
<dbReference type="SMR" id="P92870"/>
<dbReference type="GO" id="GO:0005743">
    <property type="term" value="C:mitochondrial inner membrane"/>
    <property type="evidence" value="ECO:0007669"/>
    <property type="project" value="UniProtKB-SubCell"/>
</dbReference>
<dbReference type="GO" id="GO:0045275">
    <property type="term" value="C:respiratory chain complex III"/>
    <property type="evidence" value="ECO:0007669"/>
    <property type="project" value="InterPro"/>
</dbReference>
<dbReference type="GO" id="GO:0046872">
    <property type="term" value="F:metal ion binding"/>
    <property type="evidence" value="ECO:0007669"/>
    <property type="project" value="UniProtKB-KW"/>
</dbReference>
<dbReference type="GO" id="GO:0008121">
    <property type="term" value="F:ubiquinol-cytochrome-c reductase activity"/>
    <property type="evidence" value="ECO:0007669"/>
    <property type="project" value="InterPro"/>
</dbReference>
<dbReference type="GO" id="GO:0006122">
    <property type="term" value="P:mitochondrial electron transport, ubiquinol to cytochrome c"/>
    <property type="evidence" value="ECO:0007669"/>
    <property type="project" value="TreeGrafter"/>
</dbReference>
<dbReference type="CDD" id="cd00290">
    <property type="entry name" value="cytochrome_b_C"/>
    <property type="match status" value="1"/>
</dbReference>
<dbReference type="CDD" id="cd00284">
    <property type="entry name" value="Cytochrome_b_N"/>
    <property type="match status" value="1"/>
</dbReference>
<dbReference type="FunFam" id="1.20.810.10:FF:000002">
    <property type="entry name" value="Cytochrome b"/>
    <property type="match status" value="1"/>
</dbReference>
<dbReference type="Gene3D" id="1.20.810.10">
    <property type="entry name" value="Cytochrome Bc1 Complex, Chain C"/>
    <property type="match status" value="1"/>
</dbReference>
<dbReference type="InterPro" id="IPR005798">
    <property type="entry name" value="Cyt_b/b6_C"/>
</dbReference>
<dbReference type="InterPro" id="IPR036150">
    <property type="entry name" value="Cyt_b/b6_C_sf"/>
</dbReference>
<dbReference type="InterPro" id="IPR005797">
    <property type="entry name" value="Cyt_b/b6_N"/>
</dbReference>
<dbReference type="InterPro" id="IPR027387">
    <property type="entry name" value="Cytb/b6-like_sf"/>
</dbReference>
<dbReference type="InterPro" id="IPR030689">
    <property type="entry name" value="Cytochrome_b"/>
</dbReference>
<dbReference type="InterPro" id="IPR048260">
    <property type="entry name" value="Cytochrome_b_C_euk/bac"/>
</dbReference>
<dbReference type="InterPro" id="IPR048259">
    <property type="entry name" value="Cytochrome_b_N_euk/bac"/>
</dbReference>
<dbReference type="InterPro" id="IPR016174">
    <property type="entry name" value="Di-haem_cyt_TM"/>
</dbReference>
<dbReference type="PANTHER" id="PTHR19271">
    <property type="entry name" value="CYTOCHROME B"/>
    <property type="match status" value="1"/>
</dbReference>
<dbReference type="PANTHER" id="PTHR19271:SF16">
    <property type="entry name" value="CYTOCHROME B"/>
    <property type="match status" value="1"/>
</dbReference>
<dbReference type="Pfam" id="PF00032">
    <property type="entry name" value="Cytochrom_B_C"/>
    <property type="match status" value="1"/>
</dbReference>
<dbReference type="Pfam" id="PF00033">
    <property type="entry name" value="Cytochrome_B"/>
    <property type="match status" value="1"/>
</dbReference>
<dbReference type="PIRSF" id="PIRSF038885">
    <property type="entry name" value="COB"/>
    <property type="match status" value="1"/>
</dbReference>
<dbReference type="SUPFAM" id="SSF81648">
    <property type="entry name" value="a domain/subunit of cytochrome bc1 complex (Ubiquinol-cytochrome c reductase)"/>
    <property type="match status" value="1"/>
</dbReference>
<dbReference type="SUPFAM" id="SSF81342">
    <property type="entry name" value="Transmembrane di-heme cytochromes"/>
    <property type="match status" value="1"/>
</dbReference>
<dbReference type="PROSITE" id="PS51003">
    <property type="entry name" value="CYTB_CTER"/>
    <property type="match status" value="1"/>
</dbReference>
<dbReference type="PROSITE" id="PS51002">
    <property type="entry name" value="CYTB_NTER"/>
    <property type="match status" value="1"/>
</dbReference>
<accession>P92870</accession>
<keyword id="KW-0249">Electron transport</keyword>
<keyword id="KW-0349">Heme</keyword>
<keyword id="KW-0408">Iron</keyword>
<keyword id="KW-0472">Membrane</keyword>
<keyword id="KW-0479">Metal-binding</keyword>
<keyword id="KW-0496">Mitochondrion</keyword>
<keyword id="KW-0999">Mitochondrion inner membrane</keyword>
<keyword id="KW-0679">Respiratory chain</keyword>
<keyword id="KW-0812">Transmembrane</keyword>
<keyword id="KW-1133">Transmembrane helix</keyword>
<keyword id="KW-0813">Transport</keyword>
<keyword id="KW-0830">Ubiquinone</keyword>
<organism>
    <name type="scientific">Bubalus depressicornis</name>
    <name type="common">Lowland anoa</name>
    <name type="synonym">Anoa depressicornis</name>
    <dbReference type="NCBI Taxonomy" id="27596"/>
    <lineage>
        <taxon>Eukaryota</taxon>
        <taxon>Metazoa</taxon>
        <taxon>Chordata</taxon>
        <taxon>Craniata</taxon>
        <taxon>Vertebrata</taxon>
        <taxon>Euteleostomi</taxon>
        <taxon>Mammalia</taxon>
        <taxon>Eutheria</taxon>
        <taxon>Laurasiatheria</taxon>
        <taxon>Artiodactyla</taxon>
        <taxon>Ruminantia</taxon>
        <taxon>Pecora</taxon>
        <taxon>Bovidae</taxon>
        <taxon>Bovinae</taxon>
        <taxon>Bubalus</taxon>
    </lineage>
</organism>
<gene>
    <name type="primary">MT-CYB</name>
    <name type="synonym">COB</name>
    <name type="synonym">CYTB</name>
    <name type="synonym">MTCYB</name>
</gene>
<geneLocation type="mitochondrion"/>
<name>CYB_BUBDE</name>
<sequence length="379" mass="42656">MTNIRKSHPLMKILNNAFIDLPAPSNISSWWNLGSLLGICLILQILTGLFLAMHYTSDTTTAFSSVAHICRDVNYGWIIRYMHANGASMFFICLYMHVGRGMYYGSYTFLETWNIGVILLFAVMATAFMGYVLPWGQMSFWGATVITNLLSAIPYIGTSLVEWIWGGFSVDKATLTRFFAFHFILPFIIAALAMVHLLFLHETGSNNPTGISSDTDKIPFHPYYTIKDILGALLLILALMLLVLFTPDLLGDPDNYTPANPLNTPPHIKPEWYFLFAYAILRSIPNKLGGVLALVLSILILILMPLLHTSKQRSMMFRPFSQCLFWILVANLLTLTWIGGQPVEHPYIIIGQLASVTYFLLILVLMPTASMIENSLLKW</sequence>
<comment type="function">
    <text evidence="2">Component of the ubiquinol-cytochrome c reductase complex (complex III or cytochrome b-c1 complex) that is part of the mitochondrial respiratory chain. The b-c1 complex mediates electron transfer from ubiquinol to cytochrome c. Contributes to the generation of a proton gradient across the mitochondrial membrane that is then used for ATP synthesis.</text>
</comment>
<comment type="cofactor">
    <cofactor evidence="2">
        <name>heme b</name>
        <dbReference type="ChEBI" id="CHEBI:60344"/>
    </cofactor>
    <text evidence="2">Binds 2 heme b groups non-covalently.</text>
</comment>
<comment type="subunit">
    <text evidence="2">The cytochrome bc1 complex contains 11 subunits: 3 respiratory subunits (MT-CYB, CYC1 and UQCRFS1), 2 core proteins (UQCRC1 and UQCRC2) and 6 low-molecular weight proteins (UQCRH/QCR6, UQCRB/QCR7, UQCRQ/QCR8, UQCR10/QCR9, UQCR11/QCR10 and a cleavage product of UQCRFS1). This cytochrome bc1 complex then forms a dimer.</text>
</comment>
<comment type="subcellular location">
    <subcellularLocation>
        <location evidence="2">Mitochondrion inner membrane</location>
        <topology evidence="2">Multi-pass membrane protein</topology>
    </subcellularLocation>
</comment>
<comment type="miscellaneous">
    <text evidence="1">Heme 1 (or BL or b562) is low-potential and absorbs at about 562 nm, and heme 2 (or BH or b566) is high-potential and absorbs at about 566 nm.</text>
</comment>
<comment type="similarity">
    <text evidence="3 4">Belongs to the cytochrome b family.</text>
</comment>
<comment type="caution">
    <text evidence="2">The full-length protein contains only eight transmembrane helices, not nine as predicted by bioinformatics tools.</text>
</comment>
<reference key="1">
    <citation type="submission" date="1996-10" db="EMBL/GenBank/DDBJ databases">
        <title>Analysis of genetic diversity of domestic water buffaloes and anoas based on variations in the mitochondrial gene for cytochrome b.</title>
        <authorList>
            <person name="Kikkawa Y."/>
            <person name="Yonekawa H."/>
            <person name="Suzuki H."/>
            <person name="Amano T."/>
        </authorList>
    </citation>
    <scope>NUCLEOTIDE SEQUENCE [GENOMIC DNA]</scope>
</reference>
<protein>
    <recommendedName>
        <fullName>Cytochrome b</fullName>
    </recommendedName>
    <alternativeName>
        <fullName>Complex III subunit 3</fullName>
    </alternativeName>
    <alternativeName>
        <fullName>Complex III subunit III</fullName>
    </alternativeName>
    <alternativeName>
        <fullName>Cytochrome b-c1 complex subunit 3</fullName>
    </alternativeName>
    <alternativeName>
        <fullName>Ubiquinol-cytochrome-c reductase complex cytochrome b subunit</fullName>
    </alternativeName>
</protein>
<proteinExistence type="inferred from homology"/>
<feature type="chain" id="PRO_0000060695" description="Cytochrome b">
    <location>
        <begin position="1"/>
        <end position="379"/>
    </location>
</feature>
<feature type="transmembrane region" description="Helical" evidence="2">
    <location>
        <begin position="33"/>
        <end position="53"/>
    </location>
</feature>
<feature type="transmembrane region" description="Helical" evidence="2">
    <location>
        <begin position="77"/>
        <end position="98"/>
    </location>
</feature>
<feature type="transmembrane region" description="Helical" evidence="2">
    <location>
        <begin position="113"/>
        <end position="133"/>
    </location>
</feature>
<feature type="transmembrane region" description="Helical" evidence="2">
    <location>
        <begin position="178"/>
        <end position="198"/>
    </location>
</feature>
<feature type="transmembrane region" description="Helical" evidence="2">
    <location>
        <begin position="226"/>
        <end position="246"/>
    </location>
</feature>
<feature type="transmembrane region" description="Helical" evidence="2">
    <location>
        <begin position="288"/>
        <end position="308"/>
    </location>
</feature>
<feature type="transmembrane region" description="Helical" evidence="2">
    <location>
        <begin position="320"/>
        <end position="340"/>
    </location>
</feature>
<feature type="transmembrane region" description="Helical" evidence="2">
    <location>
        <begin position="347"/>
        <end position="367"/>
    </location>
</feature>
<feature type="binding site" description="axial binding residue" evidence="2">
    <location>
        <position position="83"/>
    </location>
    <ligand>
        <name>heme b</name>
        <dbReference type="ChEBI" id="CHEBI:60344"/>
        <label>b562</label>
    </ligand>
    <ligandPart>
        <name>Fe</name>
        <dbReference type="ChEBI" id="CHEBI:18248"/>
    </ligandPart>
</feature>
<feature type="binding site" description="axial binding residue" evidence="2">
    <location>
        <position position="97"/>
    </location>
    <ligand>
        <name>heme b</name>
        <dbReference type="ChEBI" id="CHEBI:60344"/>
        <label>b566</label>
    </ligand>
    <ligandPart>
        <name>Fe</name>
        <dbReference type="ChEBI" id="CHEBI:18248"/>
    </ligandPart>
</feature>
<feature type="binding site" description="axial binding residue" evidence="2">
    <location>
        <position position="182"/>
    </location>
    <ligand>
        <name>heme b</name>
        <dbReference type="ChEBI" id="CHEBI:60344"/>
        <label>b562</label>
    </ligand>
    <ligandPart>
        <name>Fe</name>
        <dbReference type="ChEBI" id="CHEBI:18248"/>
    </ligandPart>
</feature>
<feature type="binding site" description="axial binding residue" evidence="2">
    <location>
        <position position="196"/>
    </location>
    <ligand>
        <name>heme b</name>
        <dbReference type="ChEBI" id="CHEBI:60344"/>
        <label>b566</label>
    </ligand>
    <ligandPart>
        <name>Fe</name>
        <dbReference type="ChEBI" id="CHEBI:18248"/>
    </ligandPart>
</feature>
<feature type="binding site" evidence="2">
    <location>
        <position position="201"/>
    </location>
    <ligand>
        <name>a ubiquinone</name>
        <dbReference type="ChEBI" id="CHEBI:16389"/>
    </ligand>
</feature>